<reference evidence="6 7" key="1">
    <citation type="submission" date="1999-03" db="EMBL/GenBank/DDBJ databases">
        <authorList>
            <person name="Luo W.Q."/>
            <person name="Chen J.H."/>
            <person name="Huang X.W."/>
            <person name="Zhou Y."/>
            <person name="Zhou H.J."/>
            <person name="Hu S.N."/>
            <person name="Yuan J.G."/>
        </authorList>
    </citation>
    <scope>NUCLEOTIDE SEQUENCE [MRNA] (ISOFORM 2)</scope>
</reference>
<reference evidence="6 7" key="2">
    <citation type="submission" date="2005-07" db="EMBL/GenBank/DDBJ databases">
        <authorList>
            <person name="Mural R.J."/>
            <person name="Istrail S."/>
            <person name="Sutton G.G."/>
            <person name="Florea L."/>
            <person name="Halpern A.L."/>
            <person name="Mobarry C.M."/>
            <person name="Lippert R."/>
            <person name="Walenz B."/>
            <person name="Shatkay H."/>
            <person name="Dew I."/>
            <person name="Miller J.R."/>
            <person name="Flanigan M.J."/>
            <person name="Edwards N.J."/>
            <person name="Bolanos R."/>
            <person name="Fasulo D."/>
            <person name="Halldorsson B.V."/>
            <person name="Hannenhalli S."/>
            <person name="Turner R."/>
            <person name="Yooseph S."/>
            <person name="Lu F."/>
            <person name="Nusskern D.R."/>
            <person name="Shue B.C."/>
            <person name="Zheng X.H."/>
            <person name="Zhong F."/>
            <person name="Delcher A.L."/>
            <person name="Huson D.H."/>
            <person name="Kravitz S.A."/>
            <person name="Mouchard L."/>
            <person name="Reinert K."/>
            <person name="Remington K.A."/>
            <person name="Clark A.G."/>
            <person name="Waterman M.S."/>
            <person name="Eichler E.E."/>
            <person name="Adams M.D."/>
            <person name="Hunkapiller M.W."/>
            <person name="Myers E.W."/>
            <person name="Venter J.C."/>
        </authorList>
    </citation>
    <scope>NUCLEOTIDE SEQUENCE [LARGE SCALE GENOMIC DNA]</scope>
</reference>
<reference evidence="6 8" key="3">
    <citation type="journal article" date="2004" name="Genome Res.">
        <title>The status, quality, and expansion of the NIH full-length cDNA project: the Mammalian Gene Collection (MGC).</title>
        <authorList>
            <consortium name="The MGC Project Team"/>
        </authorList>
    </citation>
    <scope>NUCLEOTIDE SEQUENCE [LARGE SCALE MRNA] (ISOFORM 1)</scope>
    <source>
        <tissue evidence="8">Brain</tissue>
    </source>
</reference>
<feature type="chain" id="PRO_0000323608" description="Translin-associated factor X-interacting protein 1">
    <location>
        <begin position="1"/>
        <end position="658"/>
    </location>
</feature>
<feature type="coiled-coil region" evidence="2">
    <location>
        <begin position="144"/>
        <end position="184"/>
    </location>
</feature>
<feature type="coiled-coil region" evidence="2">
    <location>
        <begin position="230"/>
        <end position="295"/>
    </location>
</feature>
<feature type="splice variant" id="VSP_052710" description="In isoform 2." evidence="4 5">
    <location>
        <begin position="1"/>
        <end position="292"/>
    </location>
</feature>
<sequence length="658" mass="76773">MGGHLSPWPTYTSGQTILQNRKPCSDDYRKRVGSCQQHPFRTAKPQYLEELENYLRKELLLLDLGTDSTQELRLQPYREIFEFFIEDFKTYKPLLSSIKNAYEGMLAHQREKIRALEPLKAKLVTVNEDCNERILAMRAEEKYEISLLKKEKMNLLKLIDKKNEEKISLQSEVTKLRKNLAEEYLHYLSERDACKILIADLNELRYQREDMSLAQSPGIWGEDPVKLTLALKMTRQDLTRTQMELNNMKANFGDVVPRRDFEMQEKTNKDLQEQLDTLRASYEEVRKEHEILMQLHMSTLKERDQFFSELQEIQRTSTPRPDWTKCKDVVAGGPERWQMLAEGKNSDQLVDVLLEEIGSGLLREKDFFPGLGYGEAIPAFLRFDGLVENKKPSKKDVVNLLKDAWKERLAEEQKETFPDFFFNFLEHRFGPSDAMAWAYTIFENIKIFHSNEVMSQFYAVLMGKRSENVYVTQKETVAQLLKEMTNADSQNEGLLTMEQFNTVLKSTFPLKTEEQIQELMEAGGWHPSSSNADLLNYRSLFMEDEEGQSEPFVQKLWEQYMDEKDEYLQQLKQELGIELHEEVTLPKLRGGLMTIDPSLDKQTVNTYMSQAFQLPESEMPEEGDEKEEAVVEILQTALERLQVIDIRRVGPREPEPAS</sequence>
<name>TXIP1_HUMAN</name>
<dbReference type="EMBL" id="AF132730">
    <property type="protein sequence ID" value="AAF66441.1"/>
    <property type="molecule type" value="mRNA"/>
</dbReference>
<dbReference type="EMBL" id="CH471092">
    <property type="protein sequence ID" value="EAW83169.1"/>
    <property type="molecule type" value="Genomic_DNA"/>
</dbReference>
<dbReference type="EMBL" id="CH471092">
    <property type="protein sequence ID" value="EAW83174.1"/>
    <property type="molecule type" value="Genomic_DNA"/>
</dbReference>
<dbReference type="EMBL" id="BC111018">
    <property type="protein sequence ID" value="AAI11019.1"/>
    <property type="molecule type" value="mRNA"/>
</dbReference>
<dbReference type="CCDS" id="CCDS10846.2">
    <molecule id="Q2TAA8-1"/>
</dbReference>
<dbReference type="RefSeq" id="NP_001275921.1">
    <molecule id="Q2TAA8-2"/>
    <property type="nucleotide sequence ID" value="NM_001288992.3"/>
</dbReference>
<dbReference type="RefSeq" id="NP_001275922.1">
    <molecule id="Q2TAA8-2"/>
    <property type="nucleotide sequence ID" value="NM_001288993.3"/>
</dbReference>
<dbReference type="RefSeq" id="NP_001275923.1">
    <molecule id="Q2TAA8-2"/>
    <property type="nucleotide sequence ID" value="NM_001288994.3"/>
</dbReference>
<dbReference type="RefSeq" id="NP_060900.2">
    <molecule id="Q2TAA8-1"/>
    <property type="nucleotide sequence ID" value="NM_018430.4"/>
</dbReference>
<dbReference type="SMR" id="Q2TAA8"/>
<dbReference type="BioGRID" id="120925">
    <property type="interactions" value="24"/>
</dbReference>
<dbReference type="FunCoup" id="Q2TAA8">
    <property type="interactions" value="31"/>
</dbReference>
<dbReference type="IntAct" id="Q2TAA8">
    <property type="interactions" value="13"/>
</dbReference>
<dbReference type="MINT" id="Q2TAA8"/>
<dbReference type="STRING" id="9606.ENSP00000457241"/>
<dbReference type="iPTMnet" id="Q2TAA8"/>
<dbReference type="PhosphoSitePlus" id="Q2TAA8"/>
<dbReference type="BioMuta" id="TSNAXIP1"/>
<dbReference type="DMDM" id="121946829"/>
<dbReference type="jPOST" id="Q2TAA8"/>
<dbReference type="MassIVE" id="Q2TAA8"/>
<dbReference type="PaxDb" id="9606-ENSP00000457241"/>
<dbReference type="PeptideAtlas" id="Q2TAA8"/>
<dbReference type="ProteomicsDB" id="61455">
    <molecule id="Q2TAA8-1"/>
</dbReference>
<dbReference type="ProteomicsDB" id="61456">
    <molecule id="Q2TAA8-2"/>
</dbReference>
<dbReference type="Antibodypedia" id="29631">
    <property type="antibodies" value="33 antibodies from 15 providers"/>
</dbReference>
<dbReference type="DNASU" id="55815"/>
<dbReference type="Ensembl" id="ENST00000388833.7">
    <molecule id="Q2TAA8-1"/>
    <property type="protein sequence ID" value="ENSP00000373485.3"/>
    <property type="gene ID" value="ENSG00000102904.15"/>
</dbReference>
<dbReference type="GeneID" id="55815"/>
<dbReference type="KEGG" id="hsa:55815"/>
<dbReference type="UCSC" id="uc002euj.5">
    <molecule id="Q2TAA8-1"/>
    <property type="organism name" value="human"/>
</dbReference>
<dbReference type="AGR" id="HGNC:18586"/>
<dbReference type="CTD" id="55815"/>
<dbReference type="DisGeNET" id="55815"/>
<dbReference type="GeneCards" id="TSNAXIP1"/>
<dbReference type="HGNC" id="HGNC:18586">
    <property type="gene designation" value="TSNAXIP1"/>
</dbReference>
<dbReference type="HPA" id="ENSG00000102904">
    <property type="expression patterns" value="Tissue enhanced (fallopian tube, testis)"/>
</dbReference>
<dbReference type="MalaCards" id="TSNAXIP1"/>
<dbReference type="MIM" id="607720">
    <property type="type" value="gene"/>
</dbReference>
<dbReference type="neXtProt" id="NX_Q2TAA8"/>
<dbReference type="OpenTargets" id="ENSG00000102904"/>
<dbReference type="PharmGKB" id="PA134961990"/>
<dbReference type="VEuPathDB" id="HostDB:ENSG00000102904"/>
<dbReference type="eggNOG" id="ENOG502QTWK">
    <property type="taxonomic scope" value="Eukaryota"/>
</dbReference>
<dbReference type="GeneTree" id="ENSGT00390000018598"/>
<dbReference type="HOGENOM" id="CLU_028246_0_0_1"/>
<dbReference type="InParanoid" id="Q2TAA8"/>
<dbReference type="OrthoDB" id="261426at2759"/>
<dbReference type="PAN-GO" id="Q2TAA8">
    <property type="GO annotations" value="1 GO annotation based on evolutionary models"/>
</dbReference>
<dbReference type="PhylomeDB" id="Q2TAA8"/>
<dbReference type="TreeFam" id="TF329002"/>
<dbReference type="PathwayCommons" id="Q2TAA8"/>
<dbReference type="SignaLink" id="Q2TAA8"/>
<dbReference type="BioGRID-ORCS" id="55815">
    <property type="hits" value="18 hits in 1150 CRISPR screens"/>
</dbReference>
<dbReference type="ChiTaRS" id="TSNAXIP1">
    <property type="organism name" value="human"/>
</dbReference>
<dbReference type="GenomeRNAi" id="55815"/>
<dbReference type="Pharos" id="Q2TAA8">
    <property type="development level" value="Tdark"/>
</dbReference>
<dbReference type="PRO" id="PR:Q2TAA8"/>
<dbReference type="Proteomes" id="UP000005640">
    <property type="component" value="Chromosome 16"/>
</dbReference>
<dbReference type="RNAct" id="Q2TAA8">
    <property type="molecule type" value="protein"/>
</dbReference>
<dbReference type="Bgee" id="ENSG00000102904">
    <property type="expression patterns" value="Expressed in right uterine tube and 113 other cell types or tissues"/>
</dbReference>
<dbReference type="ExpressionAtlas" id="Q2TAA8">
    <property type="expression patterns" value="baseline and differential"/>
</dbReference>
<dbReference type="GO" id="GO:0005737">
    <property type="term" value="C:cytoplasm"/>
    <property type="evidence" value="ECO:0000318"/>
    <property type="project" value="GO_Central"/>
</dbReference>
<dbReference type="GO" id="GO:0048471">
    <property type="term" value="C:perinuclear region of cytoplasm"/>
    <property type="evidence" value="ECO:0007669"/>
    <property type="project" value="UniProtKB-SubCell"/>
</dbReference>
<dbReference type="GO" id="GO:0030154">
    <property type="term" value="P:cell differentiation"/>
    <property type="evidence" value="ECO:0007669"/>
    <property type="project" value="UniProtKB-KW"/>
</dbReference>
<dbReference type="GO" id="GO:0007283">
    <property type="term" value="P:spermatogenesis"/>
    <property type="evidence" value="ECO:0007669"/>
    <property type="project" value="UniProtKB-KW"/>
</dbReference>
<dbReference type="InterPro" id="IPR032755">
    <property type="entry name" value="TSNAXIP1_N"/>
</dbReference>
<dbReference type="PANTHER" id="PTHR16306">
    <property type="entry name" value="TRANSLIN-ASSOCIATED FACTOR X-INTERACTING PROTEIN 1"/>
    <property type="match status" value="1"/>
</dbReference>
<dbReference type="PANTHER" id="PTHR16306:SF0">
    <property type="entry name" value="TRANSLIN-ASSOCIATED FACTOR X-INTERACTING PROTEIN 1"/>
    <property type="match status" value="1"/>
</dbReference>
<dbReference type="Pfam" id="PF15739">
    <property type="entry name" value="TSNAXIP1_N"/>
    <property type="match status" value="1"/>
</dbReference>
<proteinExistence type="evidence at protein level"/>
<evidence type="ECO:0000250" key="1">
    <source>
        <dbReference type="UniProtKB" id="Q99P25"/>
    </source>
</evidence>
<evidence type="ECO:0000255" key="2"/>
<evidence type="ECO:0000269" key="3">
    <source>
    </source>
</evidence>
<evidence type="ECO:0000303" key="4">
    <source>
    </source>
</evidence>
<evidence type="ECO:0000303" key="5">
    <source ref="1"/>
</evidence>
<evidence type="ECO:0000305" key="6"/>
<evidence type="ECO:0000312" key="7">
    <source>
        <dbReference type="EMBL" id="AAF66441.1"/>
    </source>
</evidence>
<evidence type="ECO:0000312" key="8">
    <source>
        <dbReference type="EMBL" id="AAI11019.1"/>
    </source>
</evidence>
<protein>
    <recommendedName>
        <fullName>Translin-associated factor X-interacting protein 1</fullName>
        <shortName>Trax-interacting protein 1</shortName>
    </recommendedName>
</protein>
<comment type="function">
    <text evidence="1">Possible role in spermatogenesis.</text>
</comment>
<comment type="subunit">
    <text evidence="1">Interacts with TSNAX.</text>
</comment>
<comment type="interaction">
    <interactant intactId="EBI-6872498">
        <id>Q2TAA8</id>
    </interactant>
    <interactant intactId="EBI-374980">
        <id>O00311</id>
        <label>CDC7</label>
    </interactant>
    <organismsDiffer>false</organismsDiffer>
    <experiments>3</experiments>
</comment>
<comment type="interaction">
    <interactant intactId="EBI-6872498">
        <id>Q2TAA8</id>
    </interactant>
    <interactant intactId="EBI-7225287">
        <id>Q96MY7</id>
        <label>FAM161B</label>
    </interactant>
    <organismsDiffer>false</organismsDiffer>
    <experiments>3</experiments>
</comment>
<comment type="interaction">
    <interactant intactId="EBI-6872498">
        <id>Q2TAA8</id>
    </interactant>
    <interactant intactId="EBI-2798416">
        <id>Q99633</id>
        <label>PRPF18</label>
    </interactant>
    <organismsDiffer>false</organismsDiffer>
    <experiments>3</experiments>
</comment>
<comment type="interaction">
    <interactant intactId="EBI-6872498">
        <id>Q2TAA8</id>
    </interactant>
    <interactant intactId="EBI-742688">
        <id>Q9NZD8</id>
        <label>SPG21</label>
    </interactant>
    <organismsDiffer>false</organismsDiffer>
    <experiments>3</experiments>
</comment>
<comment type="subcellular location">
    <subcellularLocation>
        <location evidence="1">Cytoplasm</location>
        <location evidence="1">Perinuclear region</location>
    </subcellularLocation>
</comment>
<comment type="alternative products">
    <event type="alternative splicing"/>
    <isoform>
        <id>Q2TAA8-1</id>
        <name evidence="3">1</name>
        <sequence type="displayed"/>
    </isoform>
    <isoform>
        <id>Q2TAA8-2</id>
        <name evidence="3">2</name>
        <sequence type="described" ref="VSP_052710"/>
    </isoform>
</comment>
<accession>Q2TAA8</accession>
<accession>Q9P105</accession>
<gene>
    <name evidence="8" type="primary">TSNAXIP1</name>
    <name type="synonym">TXI1</name>
</gene>
<keyword id="KW-0025">Alternative splicing</keyword>
<keyword id="KW-0175">Coiled coil</keyword>
<keyword id="KW-0963">Cytoplasm</keyword>
<keyword id="KW-0217">Developmental protein</keyword>
<keyword id="KW-0221">Differentiation</keyword>
<keyword id="KW-1267">Proteomics identification</keyword>
<keyword id="KW-1185">Reference proteome</keyword>
<keyword id="KW-0744">Spermatogenesis</keyword>
<organism>
    <name type="scientific">Homo sapiens</name>
    <name type="common">Human</name>
    <dbReference type="NCBI Taxonomy" id="9606"/>
    <lineage>
        <taxon>Eukaryota</taxon>
        <taxon>Metazoa</taxon>
        <taxon>Chordata</taxon>
        <taxon>Craniata</taxon>
        <taxon>Vertebrata</taxon>
        <taxon>Euteleostomi</taxon>
        <taxon>Mammalia</taxon>
        <taxon>Eutheria</taxon>
        <taxon>Euarchontoglires</taxon>
        <taxon>Primates</taxon>
        <taxon>Haplorrhini</taxon>
        <taxon>Catarrhini</taxon>
        <taxon>Hominidae</taxon>
        <taxon>Homo</taxon>
    </lineage>
</organism>